<organism>
    <name type="scientific">Paraburkholderia phytofirmans (strain DSM 17436 / LMG 22146 / PsJN)</name>
    <name type="common">Burkholderia phytofirmans</name>
    <dbReference type="NCBI Taxonomy" id="398527"/>
    <lineage>
        <taxon>Bacteria</taxon>
        <taxon>Pseudomonadati</taxon>
        <taxon>Pseudomonadota</taxon>
        <taxon>Betaproteobacteria</taxon>
        <taxon>Burkholderiales</taxon>
        <taxon>Burkholderiaceae</taxon>
        <taxon>Paraburkholderia</taxon>
    </lineage>
</organism>
<protein>
    <recommendedName>
        <fullName evidence="1">Phosphomethylpyrimidine synthase</fullName>
        <ecNumber evidence="1">4.1.99.17</ecNumber>
    </recommendedName>
    <alternativeName>
        <fullName evidence="1">Hydroxymethylpyrimidine phosphate synthase</fullName>
        <shortName evidence="1">HMP-P synthase</shortName>
        <shortName evidence="1">HMP-phosphate synthase</shortName>
        <shortName evidence="1">HMPP synthase</shortName>
    </alternativeName>
    <alternativeName>
        <fullName evidence="1">Thiamine biosynthesis protein ThiC</fullName>
    </alternativeName>
</protein>
<name>THIC_PARPJ</name>
<sequence>MNANPKFLSADAHVDEAAVAPLPNSRKVYVTGSRADIRVPMREISQADTPDSFGGEKNPPVYVYDTSGPYSDPEAKIDIRAGLPALRQAWIEERGDTEALTGLSSDFSRERAADTATADLRFKGLHRTPRRAIAGKNVSQMHYARKGIITPEMEYIAIRENQRRAEYLESLKTSGPNGEKLAAMMGRQHPGQAFGASAFGPNGLTAITPEFVREEVARGRAIIPNNINHPESEPMIIGRNFLVKVNANIGNSAVTSSIGEEVDKMTWAIRWGGDTVMDLSTGKHIHETREWIIRNSPVPIGTVPIYQALEKVNGKAEDLTWEIFRDTLIEQAEQGVDYFTIHAGVRLQYVPLTAKRMTGIVSRGGSIMAKWCLAHHKESFLYEHFEDICEIMKAYDVAFSLGDGLRPGSIYDANDEAQLGELKTLGELTQIAWKHDVQTMIEGPGHVPMQLIKENMDLQLEWCDEAPFYTLGPLTTDIAPGYDHITSGIGAAMIGWFGTAMLCYVTPKEHLGLPNKDDVKTGIITYKLAAHAADLAKGHPGAQVRDNALSKARFEFRWEDQFNLGLDPDKAREFHDETLPKDSAKVAHFCSMCGPHFCSMKITQDVREFAAQQGVTDDEALKKGMEVKSIEFMKKGAEIYQRQ</sequence>
<dbReference type="EC" id="4.1.99.17" evidence="1"/>
<dbReference type="EMBL" id="CP001052">
    <property type="protein sequence ID" value="ACD17065.1"/>
    <property type="molecule type" value="Genomic_DNA"/>
</dbReference>
<dbReference type="RefSeq" id="WP_012433656.1">
    <property type="nucleotide sequence ID" value="NC_010681.1"/>
</dbReference>
<dbReference type="SMR" id="B2SXY6"/>
<dbReference type="STRING" id="398527.Bphyt_2670"/>
<dbReference type="GeneID" id="97307161"/>
<dbReference type="KEGG" id="bpy:Bphyt_2670"/>
<dbReference type="eggNOG" id="COG0422">
    <property type="taxonomic scope" value="Bacteria"/>
</dbReference>
<dbReference type="HOGENOM" id="CLU_013181_2_1_4"/>
<dbReference type="OrthoDB" id="9805897at2"/>
<dbReference type="UniPathway" id="UPA00060"/>
<dbReference type="Proteomes" id="UP000001739">
    <property type="component" value="Chromosome 1"/>
</dbReference>
<dbReference type="GO" id="GO:0005829">
    <property type="term" value="C:cytosol"/>
    <property type="evidence" value="ECO:0007669"/>
    <property type="project" value="TreeGrafter"/>
</dbReference>
<dbReference type="GO" id="GO:0051539">
    <property type="term" value="F:4 iron, 4 sulfur cluster binding"/>
    <property type="evidence" value="ECO:0007669"/>
    <property type="project" value="UniProtKB-KW"/>
</dbReference>
<dbReference type="GO" id="GO:0016830">
    <property type="term" value="F:carbon-carbon lyase activity"/>
    <property type="evidence" value="ECO:0007669"/>
    <property type="project" value="InterPro"/>
</dbReference>
<dbReference type="GO" id="GO:0008270">
    <property type="term" value="F:zinc ion binding"/>
    <property type="evidence" value="ECO:0007669"/>
    <property type="project" value="UniProtKB-UniRule"/>
</dbReference>
<dbReference type="GO" id="GO:0009228">
    <property type="term" value="P:thiamine biosynthetic process"/>
    <property type="evidence" value="ECO:0007669"/>
    <property type="project" value="UniProtKB-KW"/>
</dbReference>
<dbReference type="GO" id="GO:0009229">
    <property type="term" value="P:thiamine diphosphate biosynthetic process"/>
    <property type="evidence" value="ECO:0007669"/>
    <property type="project" value="UniProtKB-UniRule"/>
</dbReference>
<dbReference type="FunFam" id="3.20.20.540:FF:000001">
    <property type="entry name" value="Phosphomethylpyrimidine synthase"/>
    <property type="match status" value="1"/>
</dbReference>
<dbReference type="Gene3D" id="6.10.250.620">
    <property type="match status" value="1"/>
</dbReference>
<dbReference type="Gene3D" id="3.20.20.540">
    <property type="entry name" value="Radical SAM ThiC family, central domain"/>
    <property type="match status" value="1"/>
</dbReference>
<dbReference type="HAMAP" id="MF_00089">
    <property type="entry name" value="ThiC"/>
    <property type="match status" value="1"/>
</dbReference>
<dbReference type="InterPro" id="IPR037509">
    <property type="entry name" value="ThiC"/>
</dbReference>
<dbReference type="InterPro" id="IPR025747">
    <property type="entry name" value="ThiC-associated_dom"/>
</dbReference>
<dbReference type="InterPro" id="IPR038521">
    <property type="entry name" value="ThiC/Bza_core_dom"/>
</dbReference>
<dbReference type="InterPro" id="IPR002817">
    <property type="entry name" value="ThiC/BzaA/B"/>
</dbReference>
<dbReference type="NCBIfam" id="NF006763">
    <property type="entry name" value="PRK09284.1"/>
    <property type="match status" value="1"/>
</dbReference>
<dbReference type="NCBIfam" id="NF009895">
    <property type="entry name" value="PRK13352.1"/>
    <property type="match status" value="1"/>
</dbReference>
<dbReference type="NCBIfam" id="TIGR00190">
    <property type="entry name" value="thiC"/>
    <property type="match status" value="1"/>
</dbReference>
<dbReference type="PANTHER" id="PTHR30557:SF1">
    <property type="entry name" value="PHOSPHOMETHYLPYRIMIDINE SYNTHASE, CHLOROPLASTIC"/>
    <property type="match status" value="1"/>
</dbReference>
<dbReference type="PANTHER" id="PTHR30557">
    <property type="entry name" value="THIAMINE BIOSYNTHESIS PROTEIN THIC"/>
    <property type="match status" value="1"/>
</dbReference>
<dbReference type="Pfam" id="PF13667">
    <property type="entry name" value="ThiC-associated"/>
    <property type="match status" value="1"/>
</dbReference>
<dbReference type="Pfam" id="PF01964">
    <property type="entry name" value="ThiC_Rad_SAM"/>
    <property type="match status" value="1"/>
</dbReference>
<dbReference type="SFLD" id="SFLDF00407">
    <property type="entry name" value="phosphomethylpyrimidine_syntha"/>
    <property type="match status" value="1"/>
</dbReference>
<dbReference type="SFLD" id="SFLDG01114">
    <property type="entry name" value="phosphomethylpyrimidine_syntha"/>
    <property type="match status" value="1"/>
</dbReference>
<dbReference type="SFLD" id="SFLDS00113">
    <property type="entry name" value="Radical_SAM_Phosphomethylpyrim"/>
    <property type="match status" value="1"/>
</dbReference>
<accession>B2SXY6</accession>
<comment type="function">
    <text evidence="1">Catalyzes the synthesis of the hydroxymethylpyrimidine phosphate (HMP-P) moiety of thiamine from aminoimidazole ribotide (AIR) in a radical S-adenosyl-L-methionine (SAM)-dependent reaction.</text>
</comment>
<comment type="catalytic activity">
    <reaction evidence="1">
        <text>5-amino-1-(5-phospho-beta-D-ribosyl)imidazole + S-adenosyl-L-methionine = 4-amino-2-methyl-5-(phosphooxymethyl)pyrimidine + CO + 5'-deoxyadenosine + formate + L-methionine + 3 H(+)</text>
        <dbReference type="Rhea" id="RHEA:24840"/>
        <dbReference type="ChEBI" id="CHEBI:15378"/>
        <dbReference type="ChEBI" id="CHEBI:15740"/>
        <dbReference type="ChEBI" id="CHEBI:17245"/>
        <dbReference type="ChEBI" id="CHEBI:17319"/>
        <dbReference type="ChEBI" id="CHEBI:57844"/>
        <dbReference type="ChEBI" id="CHEBI:58354"/>
        <dbReference type="ChEBI" id="CHEBI:59789"/>
        <dbReference type="ChEBI" id="CHEBI:137981"/>
        <dbReference type="EC" id="4.1.99.17"/>
    </reaction>
</comment>
<comment type="cofactor">
    <cofactor evidence="1">
        <name>[4Fe-4S] cluster</name>
        <dbReference type="ChEBI" id="CHEBI:49883"/>
    </cofactor>
    <text evidence="1">Binds 1 [4Fe-4S] cluster per subunit. The cluster is coordinated with 3 cysteines and an exchangeable S-adenosyl-L-methionine.</text>
</comment>
<comment type="pathway">
    <text evidence="1">Cofactor biosynthesis; thiamine diphosphate biosynthesis.</text>
</comment>
<comment type="subunit">
    <text evidence="1">Homodimer.</text>
</comment>
<comment type="similarity">
    <text evidence="1">Belongs to the ThiC family.</text>
</comment>
<keyword id="KW-0004">4Fe-4S</keyword>
<keyword id="KW-0408">Iron</keyword>
<keyword id="KW-0411">Iron-sulfur</keyword>
<keyword id="KW-0456">Lyase</keyword>
<keyword id="KW-0479">Metal-binding</keyword>
<keyword id="KW-0949">S-adenosyl-L-methionine</keyword>
<keyword id="KW-0784">Thiamine biosynthesis</keyword>
<keyword id="KW-0862">Zinc</keyword>
<proteinExistence type="inferred from homology"/>
<reference key="1">
    <citation type="journal article" date="2011" name="J. Bacteriol.">
        <title>Complete genome sequence of the plant growth-promoting endophyte Burkholderia phytofirmans strain PsJN.</title>
        <authorList>
            <person name="Weilharter A."/>
            <person name="Mitter B."/>
            <person name="Shin M.V."/>
            <person name="Chain P.S."/>
            <person name="Nowak J."/>
            <person name="Sessitsch A."/>
        </authorList>
    </citation>
    <scope>NUCLEOTIDE SEQUENCE [LARGE SCALE GENOMIC DNA]</scope>
    <source>
        <strain>DSM 17436 / LMG 22146 / PsJN</strain>
    </source>
</reference>
<gene>
    <name evidence="1" type="primary">thiC</name>
    <name type="ordered locus">Bphyt_2670</name>
</gene>
<feature type="chain" id="PRO_1000093196" description="Phosphomethylpyrimidine synthase">
    <location>
        <begin position="1"/>
        <end position="643"/>
    </location>
</feature>
<feature type="binding site" evidence="1">
    <location>
        <position position="248"/>
    </location>
    <ligand>
        <name>substrate</name>
    </ligand>
</feature>
<feature type="binding site" evidence="1">
    <location>
        <position position="277"/>
    </location>
    <ligand>
        <name>substrate</name>
    </ligand>
</feature>
<feature type="binding site" evidence="1">
    <location>
        <position position="306"/>
    </location>
    <ligand>
        <name>substrate</name>
    </ligand>
</feature>
<feature type="binding site" evidence="1">
    <location>
        <position position="342"/>
    </location>
    <ligand>
        <name>substrate</name>
    </ligand>
</feature>
<feature type="binding site" evidence="1">
    <location>
        <begin position="362"/>
        <end position="364"/>
    </location>
    <ligand>
        <name>substrate</name>
    </ligand>
</feature>
<feature type="binding site" evidence="1">
    <location>
        <begin position="403"/>
        <end position="406"/>
    </location>
    <ligand>
        <name>substrate</name>
    </ligand>
</feature>
<feature type="binding site" evidence="1">
    <location>
        <position position="442"/>
    </location>
    <ligand>
        <name>substrate</name>
    </ligand>
</feature>
<feature type="binding site" evidence="1">
    <location>
        <position position="446"/>
    </location>
    <ligand>
        <name>Zn(2+)</name>
        <dbReference type="ChEBI" id="CHEBI:29105"/>
    </ligand>
</feature>
<feature type="binding site" evidence="1">
    <location>
        <position position="469"/>
    </location>
    <ligand>
        <name>substrate</name>
    </ligand>
</feature>
<feature type="binding site" evidence="1">
    <location>
        <position position="510"/>
    </location>
    <ligand>
        <name>Zn(2+)</name>
        <dbReference type="ChEBI" id="CHEBI:29105"/>
    </ligand>
</feature>
<feature type="binding site" evidence="1">
    <location>
        <position position="590"/>
    </location>
    <ligand>
        <name>[4Fe-4S] cluster</name>
        <dbReference type="ChEBI" id="CHEBI:49883"/>
        <note>4Fe-4S-S-AdoMet</note>
    </ligand>
</feature>
<feature type="binding site" evidence="1">
    <location>
        <position position="593"/>
    </location>
    <ligand>
        <name>[4Fe-4S] cluster</name>
        <dbReference type="ChEBI" id="CHEBI:49883"/>
        <note>4Fe-4S-S-AdoMet</note>
    </ligand>
</feature>
<feature type="binding site" evidence="1">
    <location>
        <position position="598"/>
    </location>
    <ligand>
        <name>[4Fe-4S] cluster</name>
        <dbReference type="ChEBI" id="CHEBI:49883"/>
        <note>4Fe-4S-S-AdoMet</note>
    </ligand>
</feature>
<evidence type="ECO:0000255" key="1">
    <source>
        <dbReference type="HAMAP-Rule" id="MF_00089"/>
    </source>
</evidence>